<keyword id="KW-0227">DNA damage</keyword>
<keyword id="KW-0233">DNA recombination</keyword>
<keyword id="KW-0234">DNA repair</keyword>
<keyword id="KW-0238">DNA-binding</keyword>
<keyword id="KW-1185">Reference proteome</keyword>
<sequence>MVIMARPYWSGQLRISLVSFGISLIPATESKSEIHFHEIDRETGQRVRHQKVLPESGEAVENREIVKGYEYSKGKYIPVEPEDIQNLRVASSKTIDLEQFVTVDEIDPACYEKPYFVLPENASQAEAFAVVRKALEETGKAGIGKIALAGREHLVAICAPGNPRLLGLMAYTLRFAEEMRSAEQYFAGIEAGKVDPEQLSLARELIQRKSSSFDLKKFKDEYETALRELVDARLKHVALPRQEVATARGKVIDLMDALRRSVGEENGRKKSVSGAQHRSRRKSKGEQKLKVVRSGSSSDKRRKSA</sequence>
<dbReference type="EMBL" id="CP001472">
    <property type="protein sequence ID" value="ACO34418.1"/>
    <property type="molecule type" value="Genomic_DNA"/>
</dbReference>
<dbReference type="SMR" id="C1F735"/>
<dbReference type="STRING" id="240015.ACP_3505"/>
<dbReference type="KEGG" id="aca:ACP_3505"/>
<dbReference type="eggNOG" id="COG1273">
    <property type="taxonomic scope" value="Bacteria"/>
</dbReference>
<dbReference type="HOGENOM" id="CLU_048975_0_0_0"/>
<dbReference type="InParanoid" id="C1F735"/>
<dbReference type="OrthoDB" id="9795084at2"/>
<dbReference type="Proteomes" id="UP000002207">
    <property type="component" value="Chromosome"/>
</dbReference>
<dbReference type="GO" id="GO:0003690">
    <property type="term" value="F:double-stranded DNA binding"/>
    <property type="evidence" value="ECO:0007669"/>
    <property type="project" value="UniProtKB-UniRule"/>
</dbReference>
<dbReference type="GO" id="GO:0006310">
    <property type="term" value="P:DNA recombination"/>
    <property type="evidence" value="ECO:0007669"/>
    <property type="project" value="UniProtKB-KW"/>
</dbReference>
<dbReference type="GO" id="GO:0006303">
    <property type="term" value="P:double-strand break repair via nonhomologous end joining"/>
    <property type="evidence" value="ECO:0007669"/>
    <property type="project" value="UniProtKB-UniRule"/>
</dbReference>
<dbReference type="Gene3D" id="2.40.290.10">
    <property type="match status" value="1"/>
</dbReference>
<dbReference type="HAMAP" id="MF_01875">
    <property type="entry name" value="Prokaryotic_Ku"/>
    <property type="match status" value="1"/>
</dbReference>
<dbReference type="InterPro" id="IPR006164">
    <property type="entry name" value="Ku70/Ku80_beta-barrel_dom"/>
</dbReference>
<dbReference type="InterPro" id="IPR009187">
    <property type="entry name" value="Prok_Ku"/>
</dbReference>
<dbReference type="InterPro" id="IPR016194">
    <property type="entry name" value="SPOC-like_C_dom_sf"/>
</dbReference>
<dbReference type="NCBIfam" id="TIGR02772">
    <property type="entry name" value="Ku_bact"/>
    <property type="match status" value="1"/>
</dbReference>
<dbReference type="PANTHER" id="PTHR41251">
    <property type="entry name" value="NON-HOMOLOGOUS END JOINING PROTEIN KU"/>
    <property type="match status" value="1"/>
</dbReference>
<dbReference type="PANTHER" id="PTHR41251:SF1">
    <property type="entry name" value="NON-HOMOLOGOUS END JOINING PROTEIN KU"/>
    <property type="match status" value="1"/>
</dbReference>
<dbReference type="Pfam" id="PF02735">
    <property type="entry name" value="Ku"/>
    <property type="match status" value="1"/>
</dbReference>
<dbReference type="PIRSF" id="PIRSF006493">
    <property type="entry name" value="Prok_Ku"/>
    <property type="match status" value="1"/>
</dbReference>
<dbReference type="SMART" id="SM00559">
    <property type="entry name" value="Ku78"/>
    <property type="match status" value="1"/>
</dbReference>
<dbReference type="SUPFAM" id="SSF100939">
    <property type="entry name" value="SPOC domain-like"/>
    <property type="match status" value="1"/>
</dbReference>
<proteinExistence type="inferred from homology"/>
<comment type="function">
    <text evidence="1">With LigD forms a non-homologous end joining (NHEJ) DNA repair enzyme, which repairs dsDNA breaks with reduced fidelity. Binds linear dsDNA with 5'- and 3'- overhangs but not closed circular dsDNA nor ssDNA. Recruits and stimulates the ligase activity of LigD.</text>
</comment>
<comment type="subunit">
    <text evidence="1">Homodimer. Interacts with LigD.</text>
</comment>
<comment type="similarity">
    <text evidence="1">Belongs to the prokaryotic Ku family.</text>
</comment>
<accession>C1F735</accession>
<evidence type="ECO:0000255" key="1">
    <source>
        <dbReference type="HAMAP-Rule" id="MF_01875"/>
    </source>
</evidence>
<evidence type="ECO:0000256" key="2">
    <source>
        <dbReference type="SAM" id="MobiDB-lite"/>
    </source>
</evidence>
<gene>
    <name evidence="1" type="primary">ku</name>
    <name type="ordered locus">ACP_3505</name>
</gene>
<protein>
    <recommendedName>
        <fullName evidence="1">Non-homologous end joining protein Ku</fullName>
    </recommendedName>
</protein>
<organism>
    <name type="scientific">Acidobacterium capsulatum (strain ATCC 51196 / DSM 11244 / BCRC 80197 / JCM 7670 / NBRC 15755 / NCIMB 13165 / 161)</name>
    <dbReference type="NCBI Taxonomy" id="240015"/>
    <lineage>
        <taxon>Bacteria</taxon>
        <taxon>Pseudomonadati</taxon>
        <taxon>Acidobacteriota</taxon>
        <taxon>Terriglobia</taxon>
        <taxon>Terriglobales</taxon>
        <taxon>Acidobacteriaceae</taxon>
        <taxon>Acidobacterium</taxon>
    </lineage>
</organism>
<feature type="chain" id="PRO_0000389171" description="Non-homologous end joining protein Ku">
    <location>
        <begin position="1"/>
        <end position="305"/>
    </location>
</feature>
<feature type="domain" description="Ku" evidence="1">
    <location>
        <begin position="16"/>
        <end position="202"/>
    </location>
</feature>
<feature type="region of interest" description="Disordered" evidence="2">
    <location>
        <begin position="263"/>
        <end position="305"/>
    </location>
</feature>
<name>KU_ACIC5</name>
<reference key="1">
    <citation type="journal article" date="2009" name="Appl. Environ. Microbiol.">
        <title>Three genomes from the phylum Acidobacteria provide insight into the lifestyles of these microorganisms in soils.</title>
        <authorList>
            <person name="Ward N.L."/>
            <person name="Challacombe J.F."/>
            <person name="Janssen P.H."/>
            <person name="Henrissat B."/>
            <person name="Coutinho P.M."/>
            <person name="Wu M."/>
            <person name="Xie G."/>
            <person name="Haft D.H."/>
            <person name="Sait M."/>
            <person name="Badger J."/>
            <person name="Barabote R.D."/>
            <person name="Bradley B."/>
            <person name="Brettin T.S."/>
            <person name="Brinkac L.M."/>
            <person name="Bruce D."/>
            <person name="Creasy T."/>
            <person name="Daugherty S.C."/>
            <person name="Davidsen T.M."/>
            <person name="DeBoy R.T."/>
            <person name="Detter J.C."/>
            <person name="Dodson R.J."/>
            <person name="Durkin A.S."/>
            <person name="Ganapathy A."/>
            <person name="Gwinn-Giglio M."/>
            <person name="Han C.S."/>
            <person name="Khouri H."/>
            <person name="Kiss H."/>
            <person name="Kothari S.P."/>
            <person name="Madupu R."/>
            <person name="Nelson K.E."/>
            <person name="Nelson W.C."/>
            <person name="Paulsen I."/>
            <person name="Penn K."/>
            <person name="Ren Q."/>
            <person name="Rosovitz M.J."/>
            <person name="Selengut J.D."/>
            <person name="Shrivastava S."/>
            <person name="Sullivan S.A."/>
            <person name="Tapia R."/>
            <person name="Thompson L.S."/>
            <person name="Watkins K.L."/>
            <person name="Yang Q."/>
            <person name="Yu C."/>
            <person name="Zafar N."/>
            <person name="Zhou L."/>
            <person name="Kuske C.R."/>
        </authorList>
    </citation>
    <scope>NUCLEOTIDE SEQUENCE [LARGE SCALE GENOMIC DNA]</scope>
    <source>
        <strain>ATCC 51196 / DSM 11244 / BCRC 80197 / JCM 7670 / NBRC 15755 / NCIMB 13165 / 161</strain>
    </source>
</reference>